<reference key="1">
    <citation type="journal article" date="1992" name="Nature">
        <title>Molecular and biological characterization of a murine ligand for CD40.</title>
        <authorList>
            <person name="Armitage R."/>
            <person name="Fanslow W."/>
            <person name="Sato T.A."/>
            <person name="Clifford K.N."/>
            <person name="Strockbine L."/>
            <person name="Macduff B.M."/>
            <person name="Anderson D.M."/>
            <person name="Gimpel S.D."/>
            <person name="Davis-Smith T."/>
            <person name="Maliszewski C.R."/>
            <person name="Clark E.A."/>
            <person name="Smith C.A."/>
            <person name="Grabstein K.H."/>
            <person name="Cosman D."/>
            <person name="Spriggs M.K."/>
        </authorList>
    </citation>
    <scope>NUCLEOTIDE SEQUENCE [MRNA]</scope>
    <scope>FUNCTION</scope>
</reference>
<reference key="2">
    <citation type="submission" date="2001-04" db="EMBL/GenBank/DDBJ databases">
        <authorList>
            <person name="Spriggs M.K."/>
        </authorList>
    </citation>
    <scope>SEQUENCE REVISION TO 198</scope>
</reference>
<reference key="3">
    <citation type="journal article" date="1994" name="Mol. Immunol.">
        <title>Structure of the murine CD40 ligand gene.</title>
        <authorList>
            <person name="Tsitsikov E.N."/>
            <person name="Ramesh N."/>
            <person name="Geha R.S."/>
        </authorList>
    </citation>
    <scope>NUCLEOTIDE SEQUENCE [GENOMIC DNA] OF 1-52 AND 137-260</scope>
    <source>
        <strain>129/Sv</strain>
        <tissue>Liver</tissue>
    </source>
</reference>
<reference key="4">
    <citation type="journal article" date="1992" name="Nature">
        <title>Emerging cytokine family.</title>
        <authorList>
            <person name="Farrah T."/>
            <person name="Smith C.A."/>
        </authorList>
    </citation>
    <scope>SIMILARITY TO THE TNF FAMILY</scope>
</reference>
<reference key="5">
    <citation type="journal article" date="1993" name="Int. Immunol.">
        <title>A 3-D model for the CD40 ligand predicts that it is a compact trimer similar to the tumor necrosis factors.</title>
        <authorList>
            <person name="Peitsch M.C."/>
            <person name="Jongeneel C.V."/>
        </authorList>
    </citation>
    <scope>3D-STRUCTURE MODELING OF 115-260</scope>
    <scope>DISULFIDE BOND</scope>
    <scope>SUBUNIT</scope>
</reference>
<feature type="chain" id="PRO_0000034490" description="CD40 ligand, membrane form">
    <location>
        <begin position="1"/>
        <end position="260"/>
    </location>
</feature>
<feature type="chain" id="PRO_0000034491" description="CD40 ligand, soluble form" evidence="2">
    <location>
        <begin position="112"/>
        <end position="260"/>
    </location>
</feature>
<feature type="topological domain" description="Cytoplasmic" evidence="3">
    <location>
        <begin position="1"/>
        <end position="22"/>
    </location>
</feature>
<feature type="transmembrane region" description="Helical; Signal-anchor for type II membrane protein" evidence="3">
    <location>
        <begin position="23"/>
        <end position="46"/>
    </location>
</feature>
<feature type="topological domain" description="Extracellular" evidence="3">
    <location>
        <begin position="47"/>
        <end position="260"/>
    </location>
</feature>
<feature type="domain" description="THD" evidence="4">
    <location>
        <begin position="121"/>
        <end position="260"/>
    </location>
</feature>
<feature type="site" description="Cleavage" evidence="1">
    <location>
        <begin position="111"/>
        <end position="112"/>
    </location>
</feature>
<feature type="glycosylation site" description="N-linked (GlcNAc...) asparagine" evidence="3">
    <location>
        <position position="239"/>
    </location>
</feature>
<feature type="disulfide bond" evidence="4 6">
    <location>
        <begin position="177"/>
        <end position="217"/>
    </location>
</feature>
<feature type="sequence conflict" description="In Ref. 3; AAC13640." evidence="8" ref="3">
    <original>S</original>
    <variation>I</variation>
    <location>
        <position position="198"/>
    </location>
</feature>
<proteinExistence type="evidence at protein level"/>
<accession>P27548</accession>
<keyword id="KW-1003">Cell membrane</keyword>
<keyword id="KW-0202">Cytokine</keyword>
<keyword id="KW-1015">Disulfide bond</keyword>
<keyword id="KW-0325">Glycoprotein</keyword>
<keyword id="KW-0472">Membrane</keyword>
<keyword id="KW-1185">Reference proteome</keyword>
<keyword id="KW-0964">Secreted</keyword>
<keyword id="KW-0735">Signal-anchor</keyword>
<keyword id="KW-0812">Transmembrane</keyword>
<keyword id="KW-1133">Transmembrane helix</keyword>
<name>CD40L_MOUSE</name>
<comment type="function">
    <text evidence="2 5">Cytokine that acts as a ligand to CD40/TNFRSF5 (By similarity). Costimulates T-cell proliferation and cytokine production (By similarity). Its cross-linking on T-cells generates a costimulatory signal which enhances the production of IL4 and IL10 in conjunction with the TCR/CD3 ligation and CD28 costimulation (By similarity). Induces the activation of NF-kappa-B (By similarity). Induces the activation of kinases MAPK8 and PAK2 in T-cells (By similarity). Mediates B-cell proliferation in the absence of co-stimulus as well as IgE production in the presence of IL4 (PubMed:1374165). Involved in immunoglobulin class switching (PubMed:1374165).</text>
</comment>
<comment type="function">
    <molecule>CD40 ligand, soluble form</molecule>
    <text evidence="2">Acts as a ligand for integrins, specifically ITGA5:ITGB1 and ITGAV:ITGB3; both integrins and the CD40 receptor are required for activation of CD40-CD40LG signaling, which have cell-type dependent effects, such as B-cell activation, NF-kappa-B signaling and anti-apoptotic signaling.</text>
</comment>
<comment type="subunit">
    <text evidence="2 7">Homotrimer (PubMed:8095800). Interacts with CD28 (By similarity). CD40 ligand, soluble form: Exists as either a monomer or a homotrimer (By similarity). Forms a ternary complex between CD40 and integrins for CD40-CD40LG signaling (By similarity).</text>
</comment>
<comment type="subcellular location">
    <subcellularLocation>
        <location evidence="2">Cell membrane</location>
        <topology evidence="2">Single-pass type II membrane protein</topology>
    </subcellularLocation>
    <subcellularLocation>
        <location evidence="2">Cell surface</location>
    </subcellularLocation>
</comment>
<comment type="subcellular location">
    <molecule>CD40 ligand, soluble form</molecule>
    <subcellularLocation>
        <location evidence="2">Secreted</location>
    </subcellularLocation>
    <text evidence="2">Release of soluble CD40L from platelets is partially regulated by GP IIb/IIIa, actin polymerization, and a matrix metalloproteinases (MMP) inhibitor-sensitive pathway.</text>
</comment>
<comment type="tissue specificity">
    <text>Specifically expressed on activated CD4+ T-lymphocytes.</text>
</comment>
<comment type="PTM">
    <text evidence="2">The soluble form derives from the membrane form by proteolytic processing.</text>
</comment>
<comment type="similarity">
    <text evidence="8">Belongs to the tumor necrosis factor family.</text>
</comment>
<organism>
    <name type="scientific">Mus musculus</name>
    <name type="common">Mouse</name>
    <dbReference type="NCBI Taxonomy" id="10090"/>
    <lineage>
        <taxon>Eukaryota</taxon>
        <taxon>Metazoa</taxon>
        <taxon>Chordata</taxon>
        <taxon>Craniata</taxon>
        <taxon>Vertebrata</taxon>
        <taxon>Euteleostomi</taxon>
        <taxon>Mammalia</taxon>
        <taxon>Eutheria</taxon>
        <taxon>Euarchontoglires</taxon>
        <taxon>Glires</taxon>
        <taxon>Rodentia</taxon>
        <taxon>Myomorpha</taxon>
        <taxon>Muroidea</taxon>
        <taxon>Muridae</taxon>
        <taxon>Murinae</taxon>
        <taxon>Mus</taxon>
        <taxon>Mus</taxon>
    </lineage>
</organism>
<sequence>MIETYSQPSPRSVATGLPASMKIFMYLLTVFLITQMIGSVLFAVYLHRRLDKVEEEVNLHEDFVFIKKLKRCNKGEGSLSLLNCEEMRRQFEDLVKDITLNKEEKKENSFEMQRGDEDPQIAAHVVSEANSNAASVLQWAKKGYYTMKSNLVMLENGKQLTVKREGLYYVYTQVTFCSNREPSSQRPFIVGLWLKPSSGSERILLKAANTHSSSQLCEQQSVHLGGVFELQAGASVFVNVTEASQVIHRVGFSSFGLLKL</sequence>
<dbReference type="EMBL" id="X65453">
    <property type="protein sequence ID" value="CAA46448.2"/>
    <property type="molecule type" value="mRNA"/>
</dbReference>
<dbReference type="EMBL" id="S71858">
    <property type="protein sequence ID" value="AAC13639.1"/>
    <property type="molecule type" value="Genomic_DNA"/>
</dbReference>
<dbReference type="EMBL" id="S71861">
    <property type="protein sequence ID" value="AAC13640.1"/>
    <property type="molecule type" value="Genomic_DNA"/>
</dbReference>
<dbReference type="CCDS" id="CCDS30152.1"/>
<dbReference type="PIR" id="S21738">
    <property type="entry name" value="S21738"/>
</dbReference>
<dbReference type="RefSeq" id="NP_035746.2">
    <property type="nucleotide sequence ID" value="NM_011616.2"/>
</dbReference>
<dbReference type="SMR" id="P27548"/>
<dbReference type="FunCoup" id="P27548">
    <property type="interactions" value="543"/>
</dbReference>
<dbReference type="STRING" id="10090.ENSMUSP00000033466"/>
<dbReference type="GlyCosmos" id="P27548">
    <property type="glycosylation" value="1 site, No reported glycans"/>
</dbReference>
<dbReference type="GlyGen" id="P27548">
    <property type="glycosylation" value="1 site"/>
</dbReference>
<dbReference type="iPTMnet" id="P27548"/>
<dbReference type="PhosphoSitePlus" id="P27548"/>
<dbReference type="PaxDb" id="10090-ENSMUSP00000033466"/>
<dbReference type="ProteomicsDB" id="281269"/>
<dbReference type="ABCD" id="P27548">
    <property type="antibodies" value="1 sequenced antibody"/>
</dbReference>
<dbReference type="Antibodypedia" id="16693">
    <property type="antibodies" value="2138 antibodies from 49 providers"/>
</dbReference>
<dbReference type="DNASU" id="21947"/>
<dbReference type="Ensembl" id="ENSMUST00000033466.2">
    <property type="protein sequence ID" value="ENSMUSP00000033466.2"/>
    <property type="gene ID" value="ENSMUSG00000031132.2"/>
</dbReference>
<dbReference type="GeneID" id="21947"/>
<dbReference type="KEGG" id="mmu:21947"/>
<dbReference type="UCSC" id="uc009thb.1">
    <property type="organism name" value="mouse"/>
</dbReference>
<dbReference type="AGR" id="MGI:88337"/>
<dbReference type="CTD" id="959"/>
<dbReference type="MGI" id="MGI:88337">
    <property type="gene designation" value="Cd40lg"/>
</dbReference>
<dbReference type="VEuPathDB" id="HostDB:ENSMUSG00000031132"/>
<dbReference type="eggNOG" id="KOG3656">
    <property type="taxonomic scope" value="Eukaryota"/>
</dbReference>
<dbReference type="GeneTree" id="ENSGT01130000278318"/>
<dbReference type="HOGENOM" id="CLU_093203_0_0_1"/>
<dbReference type="InParanoid" id="P27548"/>
<dbReference type="OMA" id="VSFCTKA"/>
<dbReference type="OrthoDB" id="8667946at2759"/>
<dbReference type="PhylomeDB" id="P27548"/>
<dbReference type="TreeFam" id="TF332169"/>
<dbReference type="Reactome" id="R-MMU-198933">
    <property type="pathway name" value="Immunoregulatory interactions between a Lymphoid and a non-Lymphoid cell"/>
</dbReference>
<dbReference type="Reactome" id="R-MMU-5668541">
    <property type="pathway name" value="TNFR2 non-canonical NF-kB pathway"/>
</dbReference>
<dbReference type="Reactome" id="R-MMU-5676594">
    <property type="pathway name" value="TNF receptor superfamily (TNFSF) members mediating non-canonical NF-kB pathway"/>
</dbReference>
<dbReference type="BioGRID-ORCS" id="21947">
    <property type="hits" value="0 hits in 114 CRISPR screens"/>
</dbReference>
<dbReference type="PRO" id="PR:P27548"/>
<dbReference type="Proteomes" id="UP000000589">
    <property type="component" value="Chromosome X"/>
</dbReference>
<dbReference type="RNAct" id="P27548">
    <property type="molecule type" value="protein"/>
</dbReference>
<dbReference type="Bgee" id="ENSMUSG00000031132">
    <property type="expression patterns" value="Expressed in thymus and 21 other cell types or tissues"/>
</dbReference>
<dbReference type="ExpressionAtlas" id="P27548">
    <property type="expression patterns" value="baseline and differential"/>
</dbReference>
<dbReference type="GO" id="GO:0009897">
    <property type="term" value="C:external side of plasma membrane"/>
    <property type="evidence" value="ECO:0000314"/>
    <property type="project" value="MGI"/>
</dbReference>
<dbReference type="GO" id="GO:0005615">
    <property type="term" value="C:extracellular space"/>
    <property type="evidence" value="ECO:0007669"/>
    <property type="project" value="UniProtKB-KW"/>
</dbReference>
<dbReference type="GO" id="GO:0005794">
    <property type="term" value="C:Golgi apparatus"/>
    <property type="evidence" value="ECO:0007669"/>
    <property type="project" value="Ensembl"/>
</dbReference>
<dbReference type="GO" id="GO:0005174">
    <property type="term" value="F:CD40 receptor binding"/>
    <property type="evidence" value="ECO:0000250"/>
    <property type="project" value="UniProtKB"/>
</dbReference>
<dbReference type="GO" id="GO:0005125">
    <property type="term" value="F:cytokine activity"/>
    <property type="evidence" value="ECO:0007669"/>
    <property type="project" value="UniProtKB-KW"/>
</dbReference>
<dbReference type="GO" id="GO:0005178">
    <property type="term" value="F:integrin binding"/>
    <property type="evidence" value="ECO:0007669"/>
    <property type="project" value="Ensembl"/>
</dbReference>
<dbReference type="GO" id="GO:0043539">
    <property type="term" value="F:protein serine/threonine kinase activator activity"/>
    <property type="evidence" value="ECO:0000250"/>
    <property type="project" value="UniProtKB"/>
</dbReference>
<dbReference type="GO" id="GO:0005164">
    <property type="term" value="F:tumor necrosis factor receptor binding"/>
    <property type="evidence" value="ECO:0007669"/>
    <property type="project" value="InterPro"/>
</dbReference>
<dbReference type="GO" id="GO:0030183">
    <property type="term" value="P:B cell differentiation"/>
    <property type="evidence" value="ECO:0000316"/>
    <property type="project" value="MGI"/>
</dbReference>
<dbReference type="GO" id="GO:0042100">
    <property type="term" value="P:B cell proliferation"/>
    <property type="evidence" value="ECO:0000250"/>
    <property type="project" value="UniProtKB"/>
</dbReference>
<dbReference type="GO" id="GO:0023035">
    <property type="term" value="P:CD40 signaling pathway"/>
    <property type="evidence" value="ECO:0007669"/>
    <property type="project" value="Ensembl"/>
</dbReference>
<dbReference type="GO" id="GO:0006954">
    <property type="term" value="P:inflammatory response"/>
    <property type="evidence" value="ECO:0000250"/>
    <property type="project" value="UniProtKB"/>
</dbReference>
<dbReference type="GO" id="GO:0007229">
    <property type="term" value="P:integrin-mediated signaling pathway"/>
    <property type="evidence" value="ECO:0007669"/>
    <property type="project" value="Ensembl"/>
</dbReference>
<dbReference type="GO" id="GO:0045190">
    <property type="term" value="P:isotype switching"/>
    <property type="evidence" value="ECO:0000314"/>
    <property type="project" value="UniProtKB"/>
</dbReference>
<dbReference type="GO" id="GO:0043066">
    <property type="term" value="P:negative regulation of apoptotic process"/>
    <property type="evidence" value="ECO:0000250"/>
    <property type="project" value="UniProtKB"/>
</dbReference>
<dbReference type="GO" id="GO:0030168">
    <property type="term" value="P:platelet activation"/>
    <property type="evidence" value="ECO:0000250"/>
    <property type="project" value="UniProtKB"/>
</dbReference>
<dbReference type="GO" id="GO:2000353">
    <property type="term" value="P:positive regulation of endothelial cell apoptotic process"/>
    <property type="evidence" value="ECO:0007669"/>
    <property type="project" value="Ensembl"/>
</dbReference>
<dbReference type="GO" id="GO:0032733">
    <property type="term" value="P:positive regulation of interleukin-10 production"/>
    <property type="evidence" value="ECO:0000250"/>
    <property type="project" value="UniProtKB"/>
</dbReference>
<dbReference type="GO" id="GO:0032735">
    <property type="term" value="P:positive regulation of interleukin-12 production"/>
    <property type="evidence" value="ECO:0007669"/>
    <property type="project" value="Ensembl"/>
</dbReference>
<dbReference type="GO" id="GO:0032753">
    <property type="term" value="P:positive regulation of interleukin-4 production"/>
    <property type="evidence" value="ECO:0000250"/>
    <property type="project" value="UniProtKB"/>
</dbReference>
<dbReference type="GO" id="GO:0051092">
    <property type="term" value="P:positive regulation of NF-kappaB transcription factor activity"/>
    <property type="evidence" value="ECO:0000250"/>
    <property type="project" value="UniProtKB"/>
</dbReference>
<dbReference type="GO" id="GO:0042102">
    <property type="term" value="P:positive regulation of T cell proliferation"/>
    <property type="evidence" value="ECO:0000250"/>
    <property type="project" value="UniProtKB"/>
</dbReference>
<dbReference type="GO" id="GO:0002637">
    <property type="term" value="P:regulation of immunoglobulin production"/>
    <property type="evidence" value="ECO:0000314"/>
    <property type="project" value="MGI"/>
</dbReference>
<dbReference type="GO" id="GO:0007165">
    <property type="term" value="P:signal transduction"/>
    <property type="evidence" value="ECO:0000303"/>
    <property type="project" value="UniProtKB"/>
</dbReference>
<dbReference type="CDD" id="cd00184">
    <property type="entry name" value="TNF"/>
    <property type="match status" value="1"/>
</dbReference>
<dbReference type="FunFam" id="2.60.120.40:FF:000013">
    <property type="entry name" value="CD40 ligand"/>
    <property type="match status" value="1"/>
</dbReference>
<dbReference type="Gene3D" id="2.60.120.40">
    <property type="match status" value="1"/>
</dbReference>
<dbReference type="InterPro" id="IPR003263">
    <property type="entry name" value="CD40L"/>
</dbReference>
<dbReference type="InterPro" id="IPR021184">
    <property type="entry name" value="TNF_CS"/>
</dbReference>
<dbReference type="InterPro" id="IPR006052">
    <property type="entry name" value="TNF_dom"/>
</dbReference>
<dbReference type="InterPro" id="IPR008983">
    <property type="entry name" value="Tumour_necrosis_fac-like_dom"/>
</dbReference>
<dbReference type="PANTHER" id="PTHR11471:SF5">
    <property type="entry name" value="CD40 LIGAND"/>
    <property type="match status" value="1"/>
</dbReference>
<dbReference type="PANTHER" id="PTHR11471">
    <property type="entry name" value="TUMOR NECROSIS FACTOR FAMILY MEMBER"/>
    <property type="match status" value="1"/>
</dbReference>
<dbReference type="Pfam" id="PF00229">
    <property type="entry name" value="TNF"/>
    <property type="match status" value="1"/>
</dbReference>
<dbReference type="PIRSF" id="PIRSF016527">
    <property type="entry name" value="TNF_5"/>
    <property type="match status" value="1"/>
</dbReference>
<dbReference type="PRINTS" id="PR01702">
    <property type="entry name" value="CD40LIGAND"/>
</dbReference>
<dbReference type="SMART" id="SM00207">
    <property type="entry name" value="TNF"/>
    <property type="match status" value="1"/>
</dbReference>
<dbReference type="SUPFAM" id="SSF49842">
    <property type="entry name" value="TNF-like"/>
    <property type="match status" value="1"/>
</dbReference>
<dbReference type="PROSITE" id="PS00251">
    <property type="entry name" value="THD_1"/>
    <property type="match status" value="1"/>
</dbReference>
<dbReference type="PROSITE" id="PS50049">
    <property type="entry name" value="THD_2"/>
    <property type="match status" value="1"/>
</dbReference>
<evidence type="ECO:0000250" key="1"/>
<evidence type="ECO:0000250" key="2">
    <source>
        <dbReference type="UniProtKB" id="P29965"/>
    </source>
</evidence>
<evidence type="ECO:0000255" key="3"/>
<evidence type="ECO:0000255" key="4">
    <source>
        <dbReference type="PROSITE-ProRule" id="PRU01387"/>
    </source>
</evidence>
<evidence type="ECO:0000269" key="5">
    <source>
    </source>
</evidence>
<evidence type="ECO:0000269" key="6">
    <source>
    </source>
</evidence>
<evidence type="ECO:0000303" key="7">
    <source>
    </source>
</evidence>
<evidence type="ECO:0000305" key="8"/>
<protein>
    <recommendedName>
        <fullName>CD40 ligand</fullName>
        <shortName>CD40-L</shortName>
    </recommendedName>
    <alternativeName>
        <fullName>T-cell antigen Gp39</fullName>
    </alternativeName>
    <alternativeName>
        <fullName>TNF-related activation protein</fullName>
        <shortName>TRAP</shortName>
    </alternativeName>
    <alternativeName>
        <fullName>Tumor necrosis factor ligand superfamily member 5</fullName>
    </alternativeName>
    <cdAntigenName>CD154</cdAntigenName>
    <component>
        <recommendedName>
            <fullName>CD40 ligand, membrane form</fullName>
        </recommendedName>
    </component>
    <component>
        <recommendedName>
            <fullName evidence="2">CD40 ligand, soluble form</fullName>
            <shortName evidence="2">sCD40L</shortName>
        </recommendedName>
    </component>
</protein>
<gene>
    <name type="primary">Cd40lg</name>
    <name type="synonym">Cd40l</name>
    <name type="synonym">Tnfsf5</name>
</gene>